<reference key="1">
    <citation type="journal article" date="1997" name="Eur. J. Biochem.">
        <title>Identification of the active site histidine in the corrinoid protein MtrA of the energy-conserving methyltransferase complex from Methanobacterium thermoautotrophicum.</title>
        <authorList>
            <person name="Harms U."/>
            <person name="Thauer R.K."/>
        </authorList>
    </citation>
    <scope>NUCLEOTIDE SEQUENCE [GENOMIC DNA]</scope>
</reference>
<reference key="2">
    <citation type="journal article" date="2006" name="J. Bacteriol.">
        <title>The Methanosarcina barkeri genome: comparative analysis with Methanosarcina acetivorans and Methanosarcina mazei reveals extensive rearrangement within methanosarcinal genomes.</title>
        <authorList>
            <person name="Maeder D.L."/>
            <person name="Anderson I."/>
            <person name="Brettin T.S."/>
            <person name="Bruce D.C."/>
            <person name="Gilna P."/>
            <person name="Han C.S."/>
            <person name="Lapidus A."/>
            <person name="Metcalf W.W."/>
            <person name="Saunders E."/>
            <person name="Tapia R."/>
            <person name="Sowers K.R."/>
        </authorList>
    </citation>
    <scope>NUCLEOTIDE SEQUENCE [LARGE SCALE GENOMIC DNA]</scope>
    <source>
        <strain>Fusaro / DSM 804</strain>
    </source>
</reference>
<proteinExistence type="inferred from homology"/>
<evidence type="ECO:0000305" key="1"/>
<comment type="subunit">
    <text>May be part of a complex composed of 3 subunits; MtxA, MtxH and MtxX.</text>
</comment>
<comment type="similarity">
    <text evidence="1">Belongs to the MtrA family.</text>
</comment>
<sequence>MKKIAEAWPIVKGDYTVGNPESRIAVVTLASQINSLPEAALWGSSKTENLGVEKIIINTISNSNIRYILICGKESRGHLAGHSLLAIHANGIDEKGRIVGSEGAIPFIENISREAVKRFQQQVVLLDRIGLTNLEEIMKIVREYKDQGEVYPEEPLVAISQKKRQSTFTIPHSGDIIVSEEFVMDSAAGVVCTTNDF</sequence>
<feature type="chain" id="PRO_0000147510" description="Putative methyltransferase Mtx subunit A">
    <location>
        <begin position="1"/>
        <end position="197"/>
    </location>
</feature>
<dbReference type="EC" id="2.1.1.-"/>
<dbReference type="EMBL" id="Y14612">
    <property type="protein sequence ID" value="CAA74963.1"/>
    <property type="molecule type" value="Genomic_DNA"/>
</dbReference>
<dbReference type="EMBL" id="CP000099">
    <property type="protein sequence ID" value="AAZ71004.1"/>
    <property type="molecule type" value="Genomic_DNA"/>
</dbReference>
<dbReference type="SMR" id="O32854"/>
<dbReference type="STRING" id="269797.Mbar_A2073"/>
<dbReference type="PaxDb" id="269797-Mbar_A2073"/>
<dbReference type="KEGG" id="mba:Mbar_A2073"/>
<dbReference type="eggNOG" id="arCOG03220">
    <property type="taxonomic scope" value="Archaea"/>
</dbReference>
<dbReference type="HOGENOM" id="CLU_100863_0_0_2"/>
<dbReference type="OrthoDB" id="130682at2157"/>
<dbReference type="GO" id="GO:0008168">
    <property type="term" value="F:methyltransferase activity"/>
    <property type="evidence" value="ECO:0007669"/>
    <property type="project" value="UniProtKB-KW"/>
</dbReference>
<dbReference type="GO" id="GO:0032259">
    <property type="term" value="P:methylation"/>
    <property type="evidence" value="ECO:0007669"/>
    <property type="project" value="UniProtKB-KW"/>
</dbReference>
<dbReference type="InterPro" id="IPR030688">
    <property type="entry name" value="MeTrfase_MtrA/MtxA"/>
</dbReference>
<dbReference type="NCBIfam" id="NF002126">
    <property type="entry name" value="PRK00964.1-4"/>
    <property type="match status" value="1"/>
</dbReference>
<dbReference type="NCBIfam" id="NF010654">
    <property type="entry name" value="PRK14053.1"/>
    <property type="match status" value="1"/>
</dbReference>
<dbReference type="Pfam" id="PF04208">
    <property type="entry name" value="MtrA"/>
    <property type="match status" value="1"/>
</dbReference>
<dbReference type="PIRSF" id="PIRSF009452">
    <property type="entry name" value="MtrA_MtxA"/>
    <property type="match status" value="1"/>
</dbReference>
<keyword id="KW-0489">Methyltransferase</keyword>
<keyword id="KW-0808">Transferase</keyword>
<name>MTXA_METBF</name>
<accession>O32854</accession>
<accession>Q46AT8</accession>
<gene>
    <name type="primary">mtxA</name>
    <name type="ordered locus">Mbar_A2073</name>
</gene>
<protein>
    <recommendedName>
        <fullName>Putative methyltransferase Mtx subunit A</fullName>
        <ecNumber>2.1.1.-</ecNumber>
    </recommendedName>
</protein>
<organism>
    <name type="scientific">Methanosarcina barkeri (strain Fusaro / DSM 804)</name>
    <dbReference type="NCBI Taxonomy" id="269797"/>
    <lineage>
        <taxon>Archaea</taxon>
        <taxon>Methanobacteriati</taxon>
        <taxon>Methanobacteriota</taxon>
        <taxon>Stenosarchaea group</taxon>
        <taxon>Methanomicrobia</taxon>
        <taxon>Methanosarcinales</taxon>
        <taxon>Methanosarcinaceae</taxon>
        <taxon>Methanosarcina</taxon>
    </lineage>
</organism>